<comment type="function">
    <text>Component of the adapter complexes which link clathrin to receptors in coated vesicles. Clathrin-associated protein complexes are believed to interact with the cytoplasmic tails of membrane proteins, leading to their selection and concentration. AP47 is a subunit of the plasma membrane adapter.</text>
</comment>
<comment type="subunit">
    <text>Adaptor protein complex 1 (AP-1) is a heterotetramer composed of two large adaptins (gamma- and beta'-type subunits), a medium adaptin (mu-type subunit AP47) and a small adaptin (sigma-type subunit AP19).</text>
</comment>
<comment type="subcellular location">
    <subcellularLocation>
        <location>Golgi apparatus</location>
    </subcellularLocation>
    <subcellularLocation>
        <location>Cytoplasmic vesicle</location>
        <location>Clathrin-coated vesicle membrane</location>
        <topology>Peripheral membrane protein</topology>
        <orientation>Cytoplasmic side</orientation>
    </subcellularLocation>
    <text>Component of the coat surrounding the cytoplasmic face of coated vesicles located at the Golgi complex.</text>
</comment>
<comment type="PTM">
    <text evidence="1">Regulated by phosphorylation.</text>
</comment>
<comment type="similarity">
    <text evidence="3">Belongs to the adaptor complexes medium subunit family.</text>
</comment>
<sequence>MIHSLFLMNGGGAVFLEKHWRSVVSRSVCAYLLEAQLKAGQPENVAPVLATPHHYLVSTHRHGISFVAVIQAEVPPLFVIEFLHRVAETLQDYFGECSEASIKDNVVIVYELLEEMLDNGFPLATESNILKELIKPPTILRSVVNSITGSSNVGDQLPTGQLSNIPWRRVGVKYTNNEAYFDVTEEIDAIIDKSGSTVFAEIQGVIDACIKLTGMPDLTLSFLNPRLLDDVSFHPCVRFKRWESERVLSFIPPVGNFRLMSYHVNSQNLVAIPVYVKHNINFRDDGSTGWFDITIGPKQTMGKVVENILVIIHMPKVVLNMTLTAAQGNFTFDPVTKVLIWDIGKIILPKLPTLKGLINLQSGEAKPEENPTLNIQFRIQQLAVSGLKVNRLDMYGERYKPFKGVKYVTKAGKFQVRT</sequence>
<protein>
    <recommendedName>
        <fullName>AP-1 complex subunit mu</fullName>
    </recommendedName>
    <alternativeName>
        <fullName>Clathrin assembly protein complex 1 mu medium chain homolog</fullName>
    </alternativeName>
    <alternativeName>
        <fullName>Clathrin coat assembly protein AP47 homolog</fullName>
    </alternativeName>
    <alternativeName>
        <fullName>Clathrin coat-associated protein AP47 homolog</fullName>
    </alternativeName>
    <alternativeName>
        <fullName>Golgi adaptor AP-1 47 kDa protein homolog</fullName>
    </alternativeName>
    <alternativeName>
        <fullName>HA1 47 kDa subunit homolog</fullName>
    </alternativeName>
    <alternativeName>
        <fullName>Mu-adaptin</fullName>
    </alternativeName>
</protein>
<accession>P47795</accession>
<reference key="1">
    <citation type="journal article" date="1994" name="Gene">
        <title>Two rat homologs of clathrin-associated adaptor proteins.</title>
        <authorList>
            <person name="Pevsner J."/>
            <person name="Volknandt W."/>
            <person name="Wong B.R."/>
            <person name="Scheller R.H."/>
        </authorList>
    </citation>
    <scope>NUCLEOTIDE SEQUENCE [MRNA]</scope>
    <source>
        <tissue>Electric lobe</tissue>
    </source>
</reference>
<organism>
    <name type="scientific">Diplobatis ommata</name>
    <name type="common">Ocellated electric ray</name>
    <name type="synonym">Discopyge ommata</name>
    <dbReference type="NCBI Taxonomy" id="1870830"/>
    <lineage>
        <taxon>Eukaryota</taxon>
        <taxon>Metazoa</taxon>
        <taxon>Chordata</taxon>
        <taxon>Craniata</taxon>
        <taxon>Vertebrata</taxon>
        <taxon>Chondrichthyes</taxon>
        <taxon>Elasmobranchii</taxon>
        <taxon>Batoidea</taxon>
        <taxon>Torpediniformes</taxon>
        <taxon>Narcinidae</taxon>
        <taxon>Diplobatis</taxon>
    </lineage>
</organism>
<keyword id="KW-0968">Cytoplasmic vesicle</keyword>
<keyword id="KW-0333">Golgi apparatus</keyword>
<keyword id="KW-0472">Membrane</keyword>
<keyword id="KW-0597">Phosphoprotein</keyword>
<keyword id="KW-0653">Protein transport</keyword>
<keyword id="KW-0813">Transport</keyword>
<dbReference type="EMBL" id="L07072">
    <property type="protein sequence ID" value="AAA57230.1"/>
    <property type="molecule type" value="mRNA"/>
</dbReference>
<dbReference type="PIR" id="I50530">
    <property type="entry name" value="I50530"/>
</dbReference>
<dbReference type="SMR" id="P47795"/>
<dbReference type="GO" id="GO:0030131">
    <property type="term" value="C:clathrin adaptor complex"/>
    <property type="evidence" value="ECO:0007669"/>
    <property type="project" value="InterPro"/>
</dbReference>
<dbReference type="GO" id="GO:0030665">
    <property type="term" value="C:clathrin-coated vesicle membrane"/>
    <property type="evidence" value="ECO:0007669"/>
    <property type="project" value="UniProtKB-SubCell"/>
</dbReference>
<dbReference type="GO" id="GO:0005794">
    <property type="term" value="C:Golgi apparatus"/>
    <property type="evidence" value="ECO:0007669"/>
    <property type="project" value="UniProtKB-SubCell"/>
</dbReference>
<dbReference type="GO" id="GO:0006886">
    <property type="term" value="P:intracellular protein transport"/>
    <property type="evidence" value="ECO:0007669"/>
    <property type="project" value="InterPro"/>
</dbReference>
<dbReference type="GO" id="GO:0016192">
    <property type="term" value="P:vesicle-mediated transport"/>
    <property type="evidence" value="ECO:0007669"/>
    <property type="project" value="InterPro"/>
</dbReference>
<dbReference type="CDD" id="cd14837">
    <property type="entry name" value="AP3_Mu_N"/>
    <property type="match status" value="1"/>
</dbReference>
<dbReference type="FunFam" id="3.30.450.60:FF:000012">
    <property type="entry name" value="AP-3 complex subunit mu-1 isoform X1"/>
    <property type="match status" value="1"/>
</dbReference>
<dbReference type="Gene3D" id="3.30.450.60">
    <property type="match status" value="1"/>
</dbReference>
<dbReference type="Gene3D" id="2.60.40.1170">
    <property type="entry name" value="Mu homology domain, subdomain B"/>
    <property type="match status" value="2"/>
</dbReference>
<dbReference type="InterPro" id="IPR050431">
    <property type="entry name" value="Adaptor_comp_med_subunit"/>
</dbReference>
<dbReference type="InterPro" id="IPR036168">
    <property type="entry name" value="AP2_Mu_C_sf"/>
</dbReference>
<dbReference type="InterPro" id="IPR022775">
    <property type="entry name" value="AP_mu_sigma_su"/>
</dbReference>
<dbReference type="InterPro" id="IPR001392">
    <property type="entry name" value="Clathrin_mu"/>
</dbReference>
<dbReference type="InterPro" id="IPR018240">
    <property type="entry name" value="Clathrin_mu_CS"/>
</dbReference>
<dbReference type="InterPro" id="IPR011012">
    <property type="entry name" value="Longin-like_dom_sf"/>
</dbReference>
<dbReference type="InterPro" id="IPR028565">
    <property type="entry name" value="MHD"/>
</dbReference>
<dbReference type="PANTHER" id="PTHR10529">
    <property type="entry name" value="AP COMPLEX SUBUNIT MU"/>
    <property type="match status" value="1"/>
</dbReference>
<dbReference type="Pfam" id="PF00928">
    <property type="entry name" value="Adap_comp_sub"/>
    <property type="match status" value="1"/>
</dbReference>
<dbReference type="Pfam" id="PF01217">
    <property type="entry name" value="Clat_adaptor_s"/>
    <property type="match status" value="1"/>
</dbReference>
<dbReference type="PIRSF" id="PIRSF005992">
    <property type="entry name" value="Clathrin_mu"/>
    <property type="match status" value="1"/>
</dbReference>
<dbReference type="PRINTS" id="PR00314">
    <property type="entry name" value="CLATHRINADPT"/>
</dbReference>
<dbReference type="SUPFAM" id="SSF49447">
    <property type="entry name" value="Second domain of Mu2 adaptin subunit (ap50) of ap2 adaptor"/>
    <property type="match status" value="1"/>
</dbReference>
<dbReference type="SUPFAM" id="SSF64356">
    <property type="entry name" value="SNARE-like"/>
    <property type="match status" value="1"/>
</dbReference>
<dbReference type="PROSITE" id="PS00990">
    <property type="entry name" value="CLAT_ADAPTOR_M_1"/>
    <property type="match status" value="1"/>
</dbReference>
<dbReference type="PROSITE" id="PS00991">
    <property type="entry name" value="CLAT_ADAPTOR_M_2"/>
    <property type="match status" value="1"/>
</dbReference>
<dbReference type="PROSITE" id="PS51072">
    <property type="entry name" value="MHD"/>
    <property type="match status" value="1"/>
</dbReference>
<evidence type="ECO:0000250" key="1"/>
<evidence type="ECO:0000255" key="2">
    <source>
        <dbReference type="PROSITE-ProRule" id="PRU00404"/>
    </source>
</evidence>
<evidence type="ECO:0000305" key="3"/>
<proteinExistence type="evidence at transcript level"/>
<feature type="chain" id="PRO_0000193790" description="AP-1 complex subunit mu">
    <location>
        <begin position="1"/>
        <end position="418"/>
    </location>
</feature>
<feature type="domain" description="MHD" evidence="2">
    <location>
        <begin position="176"/>
        <end position="417"/>
    </location>
</feature>
<name>AP1M_DIPOM</name>